<reference key="1">
    <citation type="journal article" date="2006" name="Genome Biol.">
        <title>The genome of Rhizobium leguminosarum has recognizable core and accessory components.</title>
        <authorList>
            <person name="Young J.P.W."/>
            <person name="Crossman L.C."/>
            <person name="Johnston A.W.B."/>
            <person name="Thomson N.R."/>
            <person name="Ghazoui Z.F."/>
            <person name="Hull K.H."/>
            <person name="Wexler M."/>
            <person name="Curson A.R.J."/>
            <person name="Todd J.D."/>
            <person name="Poole P.S."/>
            <person name="Mauchline T.H."/>
            <person name="East A.K."/>
            <person name="Quail M.A."/>
            <person name="Churcher C."/>
            <person name="Arrowsmith C."/>
            <person name="Cherevach I."/>
            <person name="Chillingworth T."/>
            <person name="Clarke K."/>
            <person name="Cronin A."/>
            <person name="Davis P."/>
            <person name="Fraser A."/>
            <person name="Hance Z."/>
            <person name="Hauser H."/>
            <person name="Jagels K."/>
            <person name="Moule S."/>
            <person name="Mungall K."/>
            <person name="Norbertczak H."/>
            <person name="Rabbinowitsch E."/>
            <person name="Sanders M."/>
            <person name="Simmonds M."/>
            <person name="Whitehead S."/>
            <person name="Parkhill J."/>
        </authorList>
    </citation>
    <scope>NUCLEOTIDE SEQUENCE [LARGE SCALE GENOMIC DNA]</scope>
    <source>
        <strain>DSM 114642 / LMG 32736 / 3841</strain>
    </source>
</reference>
<sequence length="255" mass="28216">MALPDFSMRQLLEAGVHFGHQTHRWNPKMKPYIFGDRNNIHIIDLAQTVPMLSRALQVVSDTVARGGRVLFVGTKRQASEIIADSAKRSAQYYVNSRWLGGMMTNWKTISNSIQRLRKLDEILNGEAQGFTKKERLNLEREREKLDKALGGIRDMGGTPDLMFIIDTNKEKIAIDEAKRLGIPVVAIIDSNCDPDLIDYPIPGNDDASRAIALYCELISRAAIDGIARQQGSSGRDLGASSEVPVEPALEEAAEG</sequence>
<dbReference type="EMBL" id="AM236080">
    <property type="protein sequence ID" value="CAK07713.1"/>
    <property type="molecule type" value="Genomic_DNA"/>
</dbReference>
<dbReference type="RefSeq" id="WP_003539287.1">
    <property type="nucleotide sequence ID" value="NC_008380.1"/>
</dbReference>
<dbReference type="SMR" id="Q1MH54"/>
<dbReference type="EnsemblBacteria" id="CAK07713">
    <property type="protein sequence ID" value="CAK07713"/>
    <property type="gene ID" value="RL2221"/>
</dbReference>
<dbReference type="GeneID" id="67485702"/>
<dbReference type="KEGG" id="rle:RL2221"/>
<dbReference type="eggNOG" id="COG0052">
    <property type="taxonomic scope" value="Bacteria"/>
</dbReference>
<dbReference type="HOGENOM" id="CLU_040318_2_1_5"/>
<dbReference type="Proteomes" id="UP000006575">
    <property type="component" value="Chromosome"/>
</dbReference>
<dbReference type="GO" id="GO:0022627">
    <property type="term" value="C:cytosolic small ribosomal subunit"/>
    <property type="evidence" value="ECO:0007669"/>
    <property type="project" value="TreeGrafter"/>
</dbReference>
<dbReference type="GO" id="GO:0003735">
    <property type="term" value="F:structural constituent of ribosome"/>
    <property type="evidence" value="ECO:0007669"/>
    <property type="project" value="InterPro"/>
</dbReference>
<dbReference type="GO" id="GO:0006412">
    <property type="term" value="P:translation"/>
    <property type="evidence" value="ECO:0007669"/>
    <property type="project" value="UniProtKB-UniRule"/>
</dbReference>
<dbReference type="CDD" id="cd01425">
    <property type="entry name" value="RPS2"/>
    <property type="match status" value="1"/>
</dbReference>
<dbReference type="FunFam" id="1.10.287.610:FF:000001">
    <property type="entry name" value="30S ribosomal protein S2"/>
    <property type="match status" value="1"/>
</dbReference>
<dbReference type="Gene3D" id="3.40.50.10490">
    <property type="entry name" value="Glucose-6-phosphate isomerase like protein, domain 1"/>
    <property type="match status" value="1"/>
</dbReference>
<dbReference type="Gene3D" id="1.10.287.610">
    <property type="entry name" value="Helix hairpin bin"/>
    <property type="match status" value="1"/>
</dbReference>
<dbReference type="HAMAP" id="MF_00291_B">
    <property type="entry name" value="Ribosomal_uS2_B"/>
    <property type="match status" value="1"/>
</dbReference>
<dbReference type="InterPro" id="IPR001865">
    <property type="entry name" value="Ribosomal_uS2"/>
</dbReference>
<dbReference type="InterPro" id="IPR005706">
    <property type="entry name" value="Ribosomal_uS2_bac/mit/plastid"/>
</dbReference>
<dbReference type="InterPro" id="IPR018130">
    <property type="entry name" value="Ribosomal_uS2_CS"/>
</dbReference>
<dbReference type="InterPro" id="IPR023591">
    <property type="entry name" value="Ribosomal_uS2_flav_dom_sf"/>
</dbReference>
<dbReference type="NCBIfam" id="TIGR01011">
    <property type="entry name" value="rpsB_bact"/>
    <property type="match status" value="1"/>
</dbReference>
<dbReference type="PANTHER" id="PTHR12534">
    <property type="entry name" value="30S RIBOSOMAL PROTEIN S2 PROKARYOTIC AND ORGANELLAR"/>
    <property type="match status" value="1"/>
</dbReference>
<dbReference type="PANTHER" id="PTHR12534:SF0">
    <property type="entry name" value="SMALL RIBOSOMAL SUBUNIT PROTEIN US2M"/>
    <property type="match status" value="1"/>
</dbReference>
<dbReference type="Pfam" id="PF00318">
    <property type="entry name" value="Ribosomal_S2"/>
    <property type="match status" value="1"/>
</dbReference>
<dbReference type="PRINTS" id="PR00395">
    <property type="entry name" value="RIBOSOMALS2"/>
</dbReference>
<dbReference type="SUPFAM" id="SSF52313">
    <property type="entry name" value="Ribosomal protein S2"/>
    <property type="match status" value="1"/>
</dbReference>
<dbReference type="PROSITE" id="PS00962">
    <property type="entry name" value="RIBOSOMAL_S2_1"/>
    <property type="match status" value="1"/>
</dbReference>
<dbReference type="PROSITE" id="PS00963">
    <property type="entry name" value="RIBOSOMAL_S2_2"/>
    <property type="match status" value="1"/>
</dbReference>
<proteinExistence type="inferred from homology"/>
<gene>
    <name evidence="1" type="primary">rpsB</name>
    <name type="ordered locus">RL2221</name>
</gene>
<keyword id="KW-0687">Ribonucleoprotein</keyword>
<keyword id="KW-0689">Ribosomal protein</keyword>
<comment type="similarity">
    <text evidence="1">Belongs to the universal ribosomal protein uS2 family.</text>
</comment>
<organism>
    <name type="scientific">Rhizobium johnstonii (strain DSM 114642 / LMG 32736 / 3841)</name>
    <name type="common">Rhizobium leguminosarum bv. viciae</name>
    <dbReference type="NCBI Taxonomy" id="216596"/>
    <lineage>
        <taxon>Bacteria</taxon>
        <taxon>Pseudomonadati</taxon>
        <taxon>Pseudomonadota</taxon>
        <taxon>Alphaproteobacteria</taxon>
        <taxon>Hyphomicrobiales</taxon>
        <taxon>Rhizobiaceae</taxon>
        <taxon>Rhizobium/Agrobacterium group</taxon>
        <taxon>Rhizobium</taxon>
        <taxon>Rhizobium johnstonii</taxon>
    </lineage>
</organism>
<feature type="chain" id="PRO_1000004044" description="Small ribosomal subunit protein uS2">
    <location>
        <begin position="1"/>
        <end position="255"/>
    </location>
</feature>
<feature type="region of interest" description="Disordered" evidence="2">
    <location>
        <begin position="230"/>
        <end position="255"/>
    </location>
</feature>
<name>RS2_RHIJ3</name>
<accession>Q1MH54</accession>
<evidence type="ECO:0000255" key="1">
    <source>
        <dbReference type="HAMAP-Rule" id="MF_00291"/>
    </source>
</evidence>
<evidence type="ECO:0000256" key="2">
    <source>
        <dbReference type="SAM" id="MobiDB-lite"/>
    </source>
</evidence>
<evidence type="ECO:0000305" key="3"/>
<protein>
    <recommendedName>
        <fullName evidence="1">Small ribosomal subunit protein uS2</fullName>
    </recommendedName>
    <alternativeName>
        <fullName evidence="3">30S ribosomal protein S2</fullName>
    </alternativeName>
</protein>